<organism>
    <name type="scientific">Aeromonas salmonicida (strain A449)</name>
    <dbReference type="NCBI Taxonomy" id="382245"/>
    <lineage>
        <taxon>Bacteria</taxon>
        <taxon>Pseudomonadati</taxon>
        <taxon>Pseudomonadota</taxon>
        <taxon>Gammaproteobacteria</taxon>
        <taxon>Aeromonadales</taxon>
        <taxon>Aeromonadaceae</taxon>
        <taxon>Aeromonas</taxon>
    </lineage>
</organism>
<comment type="function">
    <text evidence="1">Located on the platform of the 30S subunit, it bridges several disparate RNA helices of the 16S rRNA. Forms part of the Shine-Dalgarno cleft in the 70S ribosome.</text>
</comment>
<comment type="subunit">
    <text evidence="1">Part of the 30S ribosomal subunit. Interacts with proteins S7 and S18. Binds to IF-3.</text>
</comment>
<comment type="similarity">
    <text evidence="1">Belongs to the universal ribosomal protein uS11 family.</text>
</comment>
<name>RS11_AERS4</name>
<keyword id="KW-0687">Ribonucleoprotein</keyword>
<keyword id="KW-0689">Ribosomal protein</keyword>
<keyword id="KW-0694">RNA-binding</keyword>
<keyword id="KW-0699">rRNA-binding</keyword>
<protein>
    <recommendedName>
        <fullName evidence="1">Small ribosomal subunit protein uS11</fullName>
    </recommendedName>
    <alternativeName>
        <fullName evidence="2">30S ribosomal protein S11</fullName>
    </alternativeName>
</protein>
<proteinExistence type="inferred from homology"/>
<evidence type="ECO:0000255" key="1">
    <source>
        <dbReference type="HAMAP-Rule" id="MF_01310"/>
    </source>
</evidence>
<evidence type="ECO:0000305" key="2"/>
<sequence length="129" mass="13835">MAKTPTRARKRVKKQVSDGIAHVHASFNNTIVTITDRQGNALSWATSGGSGFRGSRKSTPFAAQVAAERAGEIAKEYGVKNLEVMVKGPGPGRESSIRALNAAGFRITNITDVTPIPHNGCRPPKKRRV</sequence>
<gene>
    <name evidence="1" type="primary">rpsK</name>
    <name type="ordered locus">ASA_4064</name>
</gene>
<accession>A4SSY3</accession>
<dbReference type="EMBL" id="CP000644">
    <property type="protein sequence ID" value="ABO92005.1"/>
    <property type="molecule type" value="Genomic_DNA"/>
</dbReference>
<dbReference type="RefSeq" id="WP_005319702.1">
    <property type="nucleotide sequence ID" value="NC_009348.1"/>
</dbReference>
<dbReference type="SMR" id="A4SSY3"/>
<dbReference type="STRING" id="29491.GCA_000820065_03487"/>
<dbReference type="GeneID" id="97858415"/>
<dbReference type="KEGG" id="asa:ASA_4064"/>
<dbReference type="eggNOG" id="COG0100">
    <property type="taxonomic scope" value="Bacteria"/>
</dbReference>
<dbReference type="HOGENOM" id="CLU_072439_5_0_6"/>
<dbReference type="Proteomes" id="UP000000225">
    <property type="component" value="Chromosome"/>
</dbReference>
<dbReference type="GO" id="GO:1990904">
    <property type="term" value="C:ribonucleoprotein complex"/>
    <property type="evidence" value="ECO:0007669"/>
    <property type="project" value="UniProtKB-KW"/>
</dbReference>
<dbReference type="GO" id="GO:0005840">
    <property type="term" value="C:ribosome"/>
    <property type="evidence" value="ECO:0007669"/>
    <property type="project" value="UniProtKB-KW"/>
</dbReference>
<dbReference type="GO" id="GO:0019843">
    <property type="term" value="F:rRNA binding"/>
    <property type="evidence" value="ECO:0007669"/>
    <property type="project" value="UniProtKB-UniRule"/>
</dbReference>
<dbReference type="GO" id="GO:0003735">
    <property type="term" value="F:structural constituent of ribosome"/>
    <property type="evidence" value="ECO:0007669"/>
    <property type="project" value="InterPro"/>
</dbReference>
<dbReference type="GO" id="GO:0006412">
    <property type="term" value="P:translation"/>
    <property type="evidence" value="ECO:0007669"/>
    <property type="project" value="UniProtKB-UniRule"/>
</dbReference>
<dbReference type="FunFam" id="3.30.420.80:FF:000001">
    <property type="entry name" value="30S ribosomal protein S11"/>
    <property type="match status" value="1"/>
</dbReference>
<dbReference type="Gene3D" id="3.30.420.80">
    <property type="entry name" value="Ribosomal protein S11"/>
    <property type="match status" value="1"/>
</dbReference>
<dbReference type="HAMAP" id="MF_01310">
    <property type="entry name" value="Ribosomal_uS11"/>
    <property type="match status" value="1"/>
</dbReference>
<dbReference type="InterPro" id="IPR001971">
    <property type="entry name" value="Ribosomal_uS11"/>
</dbReference>
<dbReference type="InterPro" id="IPR019981">
    <property type="entry name" value="Ribosomal_uS11_bac-type"/>
</dbReference>
<dbReference type="InterPro" id="IPR018102">
    <property type="entry name" value="Ribosomal_uS11_CS"/>
</dbReference>
<dbReference type="InterPro" id="IPR036967">
    <property type="entry name" value="Ribosomal_uS11_sf"/>
</dbReference>
<dbReference type="NCBIfam" id="NF003698">
    <property type="entry name" value="PRK05309.1"/>
    <property type="match status" value="1"/>
</dbReference>
<dbReference type="NCBIfam" id="TIGR03632">
    <property type="entry name" value="uS11_bact"/>
    <property type="match status" value="1"/>
</dbReference>
<dbReference type="PANTHER" id="PTHR11759">
    <property type="entry name" value="40S RIBOSOMAL PROTEIN S14/30S RIBOSOMAL PROTEIN S11"/>
    <property type="match status" value="1"/>
</dbReference>
<dbReference type="Pfam" id="PF00411">
    <property type="entry name" value="Ribosomal_S11"/>
    <property type="match status" value="1"/>
</dbReference>
<dbReference type="PIRSF" id="PIRSF002131">
    <property type="entry name" value="Ribosomal_S11"/>
    <property type="match status" value="1"/>
</dbReference>
<dbReference type="SUPFAM" id="SSF53137">
    <property type="entry name" value="Translational machinery components"/>
    <property type="match status" value="1"/>
</dbReference>
<dbReference type="PROSITE" id="PS00054">
    <property type="entry name" value="RIBOSOMAL_S11"/>
    <property type="match status" value="1"/>
</dbReference>
<reference key="1">
    <citation type="journal article" date="2008" name="BMC Genomics">
        <title>The genome of Aeromonas salmonicida subsp. salmonicida A449: insights into the evolution of a fish pathogen.</title>
        <authorList>
            <person name="Reith M.E."/>
            <person name="Singh R.K."/>
            <person name="Curtis B."/>
            <person name="Boyd J.M."/>
            <person name="Bouevitch A."/>
            <person name="Kimball J."/>
            <person name="Munholland J."/>
            <person name="Murphy C."/>
            <person name="Sarty D."/>
            <person name="Williams J."/>
            <person name="Nash J.H."/>
            <person name="Johnson S.C."/>
            <person name="Brown L.L."/>
        </authorList>
    </citation>
    <scope>NUCLEOTIDE SEQUENCE [LARGE SCALE GENOMIC DNA]</scope>
    <source>
        <strain>A449</strain>
    </source>
</reference>
<feature type="chain" id="PRO_0000294708" description="Small ribosomal subunit protein uS11">
    <location>
        <begin position="1"/>
        <end position="129"/>
    </location>
</feature>